<organism>
    <name type="scientific">Homo sapiens</name>
    <name type="common">Human</name>
    <dbReference type="NCBI Taxonomy" id="9606"/>
    <lineage>
        <taxon>Eukaryota</taxon>
        <taxon>Metazoa</taxon>
        <taxon>Chordata</taxon>
        <taxon>Craniata</taxon>
        <taxon>Vertebrata</taxon>
        <taxon>Euteleostomi</taxon>
        <taxon>Mammalia</taxon>
        <taxon>Eutheria</taxon>
        <taxon>Euarchontoglires</taxon>
        <taxon>Primates</taxon>
        <taxon>Haplorrhini</taxon>
        <taxon>Catarrhini</taxon>
        <taxon>Hominidae</taxon>
        <taxon>Homo</taxon>
    </lineage>
</organism>
<keyword id="KW-0002">3D-structure</keyword>
<keyword id="KW-0256">Endoplasmic reticulum</keyword>
<keyword id="KW-0325">Glycoprotein</keyword>
<keyword id="KW-0444">Lipid biosynthesis</keyword>
<keyword id="KW-0443">Lipid metabolism</keyword>
<keyword id="KW-0460">Magnesium</keyword>
<keyword id="KW-0464">Manganese</keyword>
<keyword id="KW-0472">Membrane</keyword>
<keyword id="KW-0479">Metal-binding</keyword>
<keyword id="KW-0539">Nucleus</keyword>
<keyword id="KW-0594">Phospholipid biosynthesis</keyword>
<keyword id="KW-1208">Phospholipid metabolism</keyword>
<keyword id="KW-0597">Phosphoprotein</keyword>
<keyword id="KW-1267">Proteomics identification</keyword>
<keyword id="KW-1185">Reference proteome</keyword>
<keyword id="KW-0808">Transferase</keyword>
<keyword id="KW-0812">Transmembrane</keyword>
<keyword id="KW-1133">Transmembrane helix</keyword>
<sequence length="416" mass="46554">MSGHRSTRKRCGDSHPESPVGFGHMSTTGCVLNKLFQLPTPPLSRHQLKRLEEHRYQSAGRSLLEPLMQGYWEWLVRRVPSWIAPNLITIIGLSINICTTILLVFYCPTATEQAPLWAYIACACGLFIYQSLDAIDGKQARRTNSSSPLGELFDHGCDSLSTVFVVLGTCIAVQLGTNPDWMFFCCFAGTFMFYCAHWQTYVSGTLRFGIIDVTEVQIFIIIMHLLAVIGGPPFWQSMIPVLNIQMKIFPALCTVAGTIFSCTNYFRVIFTGGVGKNGSTIAGTSVLSPFLHIGSVITLAAMIYKKSAVQLFEKHPCLYILTFGFVSAKITNKLVVAHMTKSEMHLHDTAFIGPALLFLDQYFNSFIDEYIVLWIALVFSFFDLIRYCVSVCNQIASHLHIHVFRIKVSTAHSNHH</sequence>
<evidence type="ECO:0000250" key="1">
    <source>
        <dbReference type="UniProtKB" id="Q4KLV1"/>
    </source>
</evidence>
<evidence type="ECO:0000255" key="2"/>
<evidence type="ECO:0000256" key="3">
    <source>
        <dbReference type="SAM" id="MobiDB-lite"/>
    </source>
</evidence>
<evidence type="ECO:0000269" key="4">
    <source>
    </source>
</evidence>
<evidence type="ECO:0000269" key="5">
    <source>
    </source>
</evidence>
<evidence type="ECO:0000269" key="6">
    <source>
    </source>
</evidence>
<evidence type="ECO:0000269" key="7">
    <source>
    </source>
</evidence>
<evidence type="ECO:0000269" key="8">
    <source>
    </source>
</evidence>
<evidence type="ECO:0000303" key="9">
    <source>
    </source>
</evidence>
<evidence type="ECO:0000305" key="10"/>
<evidence type="ECO:0000305" key="11">
    <source>
    </source>
</evidence>
<evidence type="ECO:0000305" key="12">
    <source>
    </source>
</evidence>
<evidence type="ECO:0000305" key="13">
    <source>
    </source>
</evidence>
<evidence type="ECO:0000312" key="14">
    <source>
        <dbReference type="HGNC" id="HGNC:24289"/>
    </source>
</evidence>
<evidence type="ECO:0007744" key="15">
    <source>
        <dbReference type="PDB" id="8GYW"/>
    </source>
</evidence>
<evidence type="ECO:0007744" key="16">
    <source>
        <dbReference type="PDB" id="8GYX"/>
    </source>
</evidence>
<evidence type="ECO:0007744" key="17">
    <source>
    </source>
</evidence>
<evidence type="ECO:0007744" key="18">
    <source>
    </source>
</evidence>
<evidence type="ECO:0007744" key="19">
    <source>
    </source>
</evidence>
<accession>Q9Y6K0</accession>
<accession>Q69YJ9</accession>
<accession>Q9P0Y8</accession>
<comment type="function">
    <text evidence="4 5 6 8">Catalyzes both phosphatidylcholine and phosphatidylethanolamine biosynthesis from CDP-choline and CDP-ethanolamine, respectively (PubMed:10191259, PubMed:10893425, PubMed:12216837, PubMed:37137909). Involved in protein-dependent process of phospholipid transport to distribute phosphatidyl choline to the lumenal surface (PubMed:10191259, PubMed:10893425, PubMed:12216837). Has a higher cholinephosphotransferase activity than ethanolaminephosphotransferase activity (PubMed:10191259, PubMed:12216837).</text>
</comment>
<comment type="catalytic activity">
    <reaction evidence="4">
        <text>CDP-ethanolamine + a 1,2-diacyl-sn-glycerol = a 1,2-diacyl-sn-glycero-3-phosphoethanolamine + CMP + H(+)</text>
        <dbReference type="Rhea" id="RHEA:32943"/>
        <dbReference type="ChEBI" id="CHEBI:15378"/>
        <dbReference type="ChEBI" id="CHEBI:17815"/>
        <dbReference type="ChEBI" id="CHEBI:57876"/>
        <dbReference type="ChEBI" id="CHEBI:60377"/>
        <dbReference type="ChEBI" id="CHEBI:64612"/>
        <dbReference type="EC" id="2.7.8.1"/>
    </reaction>
    <physiologicalReaction direction="left-to-right" evidence="11">
        <dbReference type="Rhea" id="RHEA:32944"/>
    </physiologicalReaction>
</comment>
<comment type="catalytic activity">
    <reaction evidence="4 8">
        <text>CDP-choline + a 1,2-diacyl-sn-glycerol = a 1,2-diacyl-sn-glycero-3-phosphocholine + CMP + H(+)</text>
        <dbReference type="Rhea" id="RHEA:32939"/>
        <dbReference type="ChEBI" id="CHEBI:15378"/>
        <dbReference type="ChEBI" id="CHEBI:17815"/>
        <dbReference type="ChEBI" id="CHEBI:57643"/>
        <dbReference type="ChEBI" id="CHEBI:58779"/>
        <dbReference type="ChEBI" id="CHEBI:60377"/>
        <dbReference type="EC" id="2.7.8.2"/>
    </reaction>
    <physiologicalReaction direction="left-to-right" evidence="8 11">
        <dbReference type="Rhea" id="RHEA:32940"/>
    </physiologicalReaction>
</comment>
<comment type="catalytic activity">
    <reaction evidence="5">
        <text>1-O-alkyl-2-acyl-sn-glycerol + CDP-choline = a 1-O-alkyl-2-acyl-sn-glycero-3-phosphocholine + CMP + H(+)</text>
        <dbReference type="Rhea" id="RHEA:36179"/>
        <dbReference type="ChEBI" id="CHEBI:15378"/>
        <dbReference type="ChEBI" id="CHEBI:36702"/>
        <dbReference type="ChEBI" id="CHEBI:52595"/>
        <dbReference type="ChEBI" id="CHEBI:58779"/>
        <dbReference type="ChEBI" id="CHEBI:60377"/>
        <dbReference type="EC" id="2.7.8.2"/>
    </reaction>
    <physiologicalReaction direction="left-to-right" evidence="12">
        <dbReference type="Rhea" id="RHEA:36180"/>
    </physiologicalReaction>
</comment>
<comment type="catalytic activity">
    <reaction evidence="4">
        <text>a 1-O-(1Z-alkenyl)-2-acyl-sn-glycerol + CDP-choline = a 1-O-(1Z-alkenyl)-2-acyl-sn-glycero-3-phosphocholine + CMP + H(+)</text>
        <dbReference type="Rhea" id="RHEA:36227"/>
        <dbReference type="ChEBI" id="CHEBI:15378"/>
        <dbReference type="ChEBI" id="CHEBI:58779"/>
        <dbReference type="ChEBI" id="CHEBI:60377"/>
        <dbReference type="ChEBI" id="CHEBI:77286"/>
        <dbReference type="ChEBI" id="CHEBI:77296"/>
        <dbReference type="EC" id="2.7.8.22"/>
    </reaction>
    <physiologicalReaction direction="left-to-right" evidence="11">
        <dbReference type="Rhea" id="RHEA:36228"/>
    </physiologicalReaction>
</comment>
<comment type="catalytic activity">
    <reaction evidence="4">
        <text>1,2-dioctanoyl-sn-glycerol + CDP-choline = 1,2-dioctanoyl-sn-glycero-3-phosphocholine + CMP + H(+)</text>
        <dbReference type="Rhea" id="RHEA:54232"/>
        <dbReference type="ChEBI" id="CHEBI:15378"/>
        <dbReference type="ChEBI" id="CHEBI:58779"/>
        <dbReference type="ChEBI" id="CHEBI:60377"/>
        <dbReference type="ChEBI" id="CHEBI:76979"/>
        <dbReference type="ChEBI" id="CHEBI:78228"/>
    </reaction>
    <physiologicalReaction direction="left-to-right" evidence="11">
        <dbReference type="Rhea" id="RHEA:54233"/>
    </physiologicalReaction>
</comment>
<comment type="catalytic activity">
    <reaction evidence="4">
        <text>1,2-didecanoyl-sn-glycerol + CDP-choline = 1,2-didecanoyl-sn-glycero-3-phosphocholine + CMP + H(+)</text>
        <dbReference type="Rhea" id="RHEA:54236"/>
        <dbReference type="ChEBI" id="CHEBI:15378"/>
        <dbReference type="ChEBI" id="CHEBI:18155"/>
        <dbReference type="ChEBI" id="CHEBI:58779"/>
        <dbReference type="ChEBI" id="CHEBI:60377"/>
        <dbReference type="ChEBI" id="CHEBI:78226"/>
    </reaction>
    <physiologicalReaction direction="left-to-right" evidence="11">
        <dbReference type="Rhea" id="RHEA:54237"/>
    </physiologicalReaction>
</comment>
<comment type="catalytic activity">
    <reaction evidence="4">
        <text>CDP-choline + 1,2-di-(9Z-octadecenoyl)-sn-glycerol = 1,2-di-(9Z-octadecenoyl)-sn-glycero-3-phosphocholine + CMP + H(+)</text>
        <dbReference type="Rhea" id="RHEA:54240"/>
        <dbReference type="ChEBI" id="CHEBI:15378"/>
        <dbReference type="ChEBI" id="CHEBI:52333"/>
        <dbReference type="ChEBI" id="CHEBI:58779"/>
        <dbReference type="ChEBI" id="CHEBI:60377"/>
        <dbReference type="ChEBI" id="CHEBI:74669"/>
    </reaction>
    <physiologicalReaction direction="left-to-right" evidence="11">
        <dbReference type="Rhea" id="RHEA:54241"/>
    </physiologicalReaction>
</comment>
<comment type="catalytic activity">
    <reaction evidence="4">
        <text>1-hexadecanoyl-2-(9Z-octadecenoyl)-sn-glycerol + CDP-choline = 1-hexadecanoyl-2-(9Z-octadecenoyl)-sn-glycero-3-phosphocholine + CMP + H(+)</text>
        <dbReference type="Rhea" id="RHEA:54244"/>
        <dbReference type="ChEBI" id="CHEBI:15378"/>
        <dbReference type="ChEBI" id="CHEBI:58779"/>
        <dbReference type="ChEBI" id="CHEBI:60377"/>
        <dbReference type="ChEBI" id="CHEBI:73001"/>
        <dbReference type="ChEBI" id="CHEBI:75466"/>
    </reaction>
    <physiologicalReaction direction="left-to-right" evidence="11">
        <dbReference type="Rhea" id="RHEA:54245"/>
    </physiologicalReaction>
</comment>
<comment type="catalytic activity">
    <reaction evidence="4">
        <text>CDP-ethanolamine + 1,2-di-(9Z-octadecenoyl)-sn-glycerol = 1,2-di-(9Z-octadecenoyl)-sn-glycero-3-phosphoethanolamine + CMP + H(+)</text>
        <dbReference type="Rhea" id="RHEA:54248"/>
        <dbReference type="ChEBI" id="CHEBI:15378"/>
        <dbReference type="ChEBI" id="CHEBI:52333"/>
        <dbReference type="ChEBI" id="CHEBI:57876"/>
        <dbReference type="ChEBI" id="CHEBI:60377"/>
        <dbReference type="ChEBI" id="CHEBI:74986"/>
    </reaction>
    <physiologicalReaction direction="left-to-right" evidence="11">
        <dbReference type="Rhea" id="RHEA:54249"/>
    </physiologicalReaction>
</comment>
<comment type="catalytic activity">
    <reaction evidence="4">
        <text>1-hexadecanoyl-2-(9Z-octadecenoyl)-sn-glycerol + CDP-ethanolamine = 1-hexadecanoyl-2-(9Z-octadecenoyl)-sn-glycero-3-phosphoethanolamine + CMP + H(+)</text>
        <dbReference type="Rhea" id="RHEA:54252"/>
        <dbReference type="ChEBI" id="CHEBI:15378"/>
        <dbReference type="ChEBI" id="CHEBI:57876"/>
        <dbReference type="ChEBI" id="CHEBI:60377"/>
        <dbReference type="ChEBI" id="CHEBI:73007"/>
        <dbReference type="ChEBI" id="CHEBI:75466"/>
    </reaction>
    <physiologicalReaction direction="left-to-right" evidence="11">
        <dbReference type="Rhea" id="RHEA:54253"/>
    </physiologicalReaction>
</comment>
<comment type="catalytic activity">
    <reaction evidence="4">
        <text>1-hexadecanoyl-2-(4Z,7Z,10Z,13Z,16Z,19Z-docosahexaenoyl)-sn-glycerol + CDP-choline = 1-hexadecanoyl-2-(4Z,7Z,10Z,13Z,16Z,19Z-docosahexaenoyl)-sn-glycero-3-phosphocholine + CMP + H(+)</text>
        <dbReference type="Rhea" id="RHEA:54332"/>
        <dbReference type="ChEBI" id="CHEBI:15378"/>
        <dbReference type="ChEBI" id="CHEBI:58779"/>
        <dbReference type="ChEBI" id="CHEBI:60377"/>
        <dbReference type="ChEBI" id="CHEBI:74963"/>
        <dbReference type="ChEBI" id="CHEBI:82949"/>
    </reaction>
    <physiologicalReaction direction="left-to-right" evidence="11">
        <dbReference type="Rhea" id="RHEA:54333"/>
    </physiologicalReaction>
</comment>
<comment type="catalytic activity">
    <reaction evidence="4">
        <text>1,2-di-(9Z-hexadecenoyl)-sn-glycerol + CDP-choline = 1,2-di-(9Z-hexadecenoyl)-sn-glycero-3-phosphocholine + CMP + H(+)</text>
        <dbReference type="Rhea" id="RHEA:54336"/>
        <dbReference type="ChEBI" id="CHEBI:15378"/>
        <dbReference type="ChEBI" id="CHEBI:58779"/>
        <dbReference type="ChEBI" id="CHEBI:60377"/>
        <dbReference type="ChEBI" id="CHEBI:83717"/>
        <dbReference type="ChEBI" id="CHEBI:84417"/>
    </reaction>
    <physiologicalReaction direction="left-to-right" evidence="11">
        <dbReference type="Rhea" id="RHEA:54337"/>
    </physiologicalReaction>
</comment>
<comment type="catalytic activity">
    <reaction evidence="4">
        <text>1,2-di-(9Z-hexadecenoyl)-sn-glycerol + CDP-ethanolamine = 1,2-di-(9Z-hexadecenoyl)-sn-glycero-3-phosphoethanolamine + CMP + H(+)</text>
        <dbReference type="Rhea" id="RHEA:54340"/>
        <dbReference type="ChEBI" id="CHEBI:15378"/>
        <dbReference type="ChEBI" id="CHEBI:57876"/>
        <dbReference type="ChEBI" id="CHEBI:60377"/>
        <dbReference type="ChEBI" id="CHEBI:84417"/>
        <dbReference type="ChEBI" id="CHEBI:138145"/>
    </reaction>
    <physiologicalReaction direction="left-to-right" evidence="11">
        <dbReference type="Rhea" id="RHEA:54341"/>
    </physiologicalReaction>
</comment>
<comment type="catalytic activity">
    <reaction evidence="5">
        <text>1-O-hexadecyl-2-acetyl-sn-glycerol + CDP-choline = 1-O-hexadecyl-2-acetyl-sn-glycero-3-phosphocholine + CMP + H(+)</text>
        <dbReference type="Rhea" id="RHEA:54348"/>
        <dbReference type="ChEBI" id="CHEBI:15378"/>
        <dbReference type="ChEBI" id="CHEBI:44811"/>
        <dbReference type="ChEBI" id="CHEBI:58779"/>
        <dbReference type="ChEBI" id="CHEBI:60377"/>
        <dbReference type="ChEBI" id="CHEBI:75936"/>
    </reaction>
    <physiologicalReaction direction="left-to-right" evidence="12">
        <dbReference type="Rhea" id="RHEA:54349"/>
    </physiologicalReaction>
</comment>
<comment type="catalytic activity">
    <reaction evidence="5">
        <text>1-O-hexadecyl-2-(5Z,8Z,11Z,14Z-eicosatetraenoyl)-sn-glycerol + CDP-choline = 1-O-hexadecyl-2-(5Z,8Z,11Z,14Z)-eicosatetraenoyl-sn-glycero-3-phosphocholine + CMP + H(+)</text>
        <dbReference type="Rhea" id="RHEA:54352"/>
        <dbReference type="ChEBI" id="CHEBI:15378"/>
        <dbReference type="ChEBI" id="CHEBI:55430"/>
        <dbReference type="ChEBI" id="CHEBI:58779"/>
        <dbReference type="ChEBI" id="CHEBI:60377"/>
        <dbReference type="ChEBI" id="CHEBI:77184"/>
    </reaction>
    <physiologicalReaction direction="left-to-right" evidence="12">
        <dbReference type="Rhea" id="RHEA:54353"/>
    </physiologicalReaction>
</comment>
<comment type="cofactor">
    <cofactor evidence="4 8">
        <name>Mg(2+)</name>
        <dbReference type="ChEBI" id="CHEBI:18420"/>
    </cofactor>
    <cofactor evidence="4">
        <name>Mn(2+)</name>
        <dbReference type="ChEBI" id="CHEBI:29035"/>
    </cofactor>
</comment>
<comment type="biophysicochemical properties">
    <kinetics>
        <KM evidence="4 6">37 uM for CDP-choline</KM>
        <KM evidence="4 6">101 uM for CDP-ethanolamine</KM>
        <Vmax evidence="4 6">10.5 nmol/min/mg enzyme with CDP-choline as substrate</Vmax>
        <Vmax evidence="4 6">4.35 nmol/min/mg enzyme with CDP-ethanolamine as substrate</Vmax>
    </kinetics>
</comment>
<comment type="pathway">
    <text evidence="4 5">Phospholipid metabolism; phosphatidylethanolamine biosynthesis; phosphatidylethanolamine from ethanolamine: step 3/3.</text>
</comment>
<comment type="pathway">
    <text evidence="4 5">Phospholipid metabolism; phosphatidylcholine biosynthesis; phosphatidylcholine from phosphocholine: step 2/2.</text>
</comment>
<comment type="subunit">
    <text evidence="8">Homodimer.</text>
</comment>
<comment type="interaction">
    <interactant intactId="EBI-1237183">
        <id>Q9Y6K0</id>
    </interactant>
    <interactant intactId="EBI-742688">
        <id>Q9NZD8</id>
        <label>SPG21</label>
    </interactant>
    <organismsDiffer>false</organismsDiffer>
    <experiments>3</experiments>
</comment>
<comment type="interaction">
    <interactant intactId="EBI-1237183">
        <id>Q9Y6K0</id>
    </interactant>
    <interactant intactId="EBI-8638294">
        <id>Q9NUH8</id>
        <label>TMEM14B</label>
    </interactant>
    <organismsDiffer>false</organismsDiffer>
    <experiments>3</experiments>
</comment>
<comment type="subcellular location">
    <subcellularLocation>
        <location evidence="7">Endoplasmic reticulum membrane</location>
        <topology evidence="7">Multi-pass membrane protein</topology>
    </subcellularLocation>
    <subcellularLocation>
        <location evidence="7">Nucleus membrane</location>
        <topology evidence="7">Multi-pass membrane protein</topology>
    </subcellularLocation>
</comment>
<comment type="tissue specificity">
    <text evidence="4">Ubiquitously expressed.</text>
</comment>
<comment type="similarity">
    <text evidence="10">Belongs to the CDP-alcohol phosphatidyltransferase class-I family.</text>
</comment>
<comment type="sequence caution" evidence="10">
    <conflict type="frameshift">
        <sequence resource="EMBL-CDS" id="AAF61194"/>
    </conflict>
</comment>
<gene>
    <name evidence="9 14" type="primary">CEPT1</name>
    <name type="ORF">PRO1101</name>
</gene>
<protein>
    <recommendedName>
        <fullName evidence="10">Choline/ethanolaminephosphotransferase 1</fullName>
        <shortName>hCEPT1</shortName>
        <ecNumber evidence="4">2.7.8.1</ecNumber>
        <ecNumber evidence="4 5 8">2.7.8.2</ecNumber>
    </recommendedName>
    <alternativeName>
        <fullName evidence="12">1-alkenyl-2-acylglycerol choline phosphotransferase</fullName>
        <ecNumber evidence="5">2.7.8.22</ecNumber>
    </alternativeName>
</protein>
<reference key="1">
    <citation type="journal article" date="1999" name="Biochem. J.">
        <title>Cloning and expression of a human choline/ethanolaminephosphotransferase: synthesis of phosphatidylcholine and phosphatidylethanolamine.</title>
        <authorList>
            <person name="Henneberry A.L."/>
            <person name="McMaster C.R."/>
        </authorList>
    </citation>
    <scope>NUCLEOTIDE SEQUENCE [MRNA]</scope>
    <scope>FUNCTION</scope>
    <scope>ENZYME ACTIVITY</scope>
    <scope>BIOPHYSICOCHEMICAL PROPERTIES</scope>
    <scope>COFACTOR</scope>
    <scope>TISSUE SPECIFICITY</scope>
    <scope>CATALYTIC ACTIVITY</scope>
</reference>
<reference key="2">
    <citation type="submission" date="1999-03" db="EMBL/GenBank/DDBJ databases">
        <title>Functional prediction of the coding sequences of 5 new genes deduced by analysis of cDNA clones from human fetal liver.</title>
        <authorList>
            <person name="Zhang C."/>
            <person name="Yu Y."/>
            <person name="Zhang S."/>
            <person name="Zhou G."/>
            <person name="Wei H."/>
            <person name="Bi J."/>
            <person name="Xu W."/>
            <person name="Zai Y."/>
            <person name="Feng F."/>
            <person name="Liu M."/>
            <person name="He F."/>
        </authorList>
    </citation>
    <scope>NUCLEOTIDE SEQUENCE [LARGE SCALE MRNA]</scope>
    <source>
        <tissue>Fetal liver</tissue>
    </source>
</reference>
<reference key="3">
    <citation type="journal article" date="2006" name="Nature">
        <title>The DNA sequence and biological annotation of human chromosome 1.</title>
        <authorList>
            <person name="Gregory S.G."/>
            <person name="Barlow K.F."/>
            <person name="McLay K.E."/>
            <person name="Kaul R."/>
            <person name="Swarbreck D."/>
            <person name="Dunham A."/>
            <person name="Scott C.E."/>
            <person name="Howe K.L."/>
            <person name="Woodfine K."/>
            <person name="Spencer C.C.A."/>
            <person name="Jones M.C."/>
            <person name="Gillson C."/>
            <person name="Searle S."/>
            <person name="Zhou Y."/>
            <person name="Kokocinski F."/>
            <person name="McDonald L."/>
            <person name="Evans R."/>
            <person name="Phillips K."/>
            <person name="Atkinson A."/>
            <person name="Cooper R."/>
            <person name="Jones C."/>
            <person name="Hall R.E."/>
            <person name="Andrews T.D."/>
            <person name="Lloyd C."/>
            <person name="Ainscough R."/>
            <person name="Almeida J.P."/>
            <person name="Ambrose K.D."/>
            <person name="Anderson F."/>
            <person name="Andrew R.W."/>
            <person name="Ashwell R.I.S."/>
            <person name="Aubin K."/>
            <person name="Babbage A.K."/>
            <person name="Bagguley C.L."/>
            <person name="Bailey J."/>
            <person name="Beasley H."/>
            <person name="Bethel G."/>
            <person name="Bird C.P."/>
            <person name="Bray-Allen S."/>
            <person name="Brown J.Y."/>
            <person name="Brown A.J."/>
            <person name="Buckley D."/>
            <person name="Burton J."/>
            <person name="Bye J."/>
            <person name="Carder C."/>
            <person name="Chapman J.C."/>
            <person name="Clark S.Y."/>
            <person name="Clarke G."/>
            <person name="Clee C."/>
            <person name="Cobley V."/>
            <person name="Collier R.E."/>
            <person name="Corby N."/>
            <person name="Coville G.J."/>
            <person name="Davies J."/>
            <person name="Deadman R."/>
            <person name="Dunn M."/>
            <person name="Earthrowl M."/>
            <person name="Ellington A.G."/>
            <person name="Errington H."/>
            <person name="Frankish A."/>
            <person name="Frankland J."/>
            <person name="French L."/>
            <person name="Garner P."/>
            <person name="Garnett J."/>
            <person name="Gay L."/>
            <person name="Ghori M.R.J."/>
            <person name="Gibson R."/>
            <person name="Gilby L.M."/>
            <person name="Gillett W."/>
            <person name="Glithero R.J."/>
            <person name="Grafham D.V."/>
            <person name="Griffiths C."/>
            <person name="Griffiths-Jones S."/>
            <person name="Grocock R."/>
            <person name="Hammond S."/>
            <person name="Harrison E.S.I."/>
            <person name="Hart E."/>
            <person name="Haugen E."/>
            <person name="Heath P.D."/>
            <person name="Holmes S."/>
            <person name="Holt K."/>
            <person name="Howden P.J."/>
            <person name="Hunt A.R."/>
            <person name="Hunt S.E."/>
            <person name="Hunter G."/>
            <person name="Isherwood J."/>
            <person name="James R."/>
            <person name="Johnson C."/>
            <person name="Johnson D."/>
            <person name="Joy A."/>
            <person name="Kay M."/>
            <person name="Kershaw J.K."/>
            <person name="Kibukawa M."/>
            <person name="Kimberley A.M."/>
            <person name="King A."/>
            <person name="Knights A.J."/>
            <person name="Lad H."/>
            <person name="Laird G."/>
            <person name="Lawlor S."/>
            <person name="Leongamornlert D.A."/>
            <person name="Lloyd D.M."/>
            <person name="Loveland J."/>
            <person name="Lovell J."/>
            <person name="Lush M.J."/>
            <person name="Lyne R."/>
            <person name="Martin S."/>
            <person name="Mashreghi-Mohammadi M."/>
            <person name="Matthews L."/>
            <person name="Matthews N.S.W."/>
            <person name="McLaren S."/>
            <person name="Milne S."/>
            <person name="Mistry S."/>
            <person name="Moore M.J.F."/>
            <person name="Nickerson T."/>
            <person name="O'Dell C.N."/>
            <person name="Oliver K."/>
            <person name="Palmeiri A."/>
            <person name="Palmer S.A."/>
            <person name="Parker A."/>
            <person name="Patel D."/>
            <person name="Pearce A.V."/>
            <person name="Peck A.I."/>
            <person name="Pelan S."/>
            <person name="Phelps K."/>
            <person name="Phillimore B.J."/>
            <person name="Plumb R."/>
            <person name="Rajan J."/>
            <person name="Raymond C."/>
            <person name="Rouse G."/>
            <person name="Saenphimmachak C."/>
            <person name="Sehra H.K."/>
            <person name="Sheridan E."/>
            <person name="Shownkeen R."/>
            <person name="Sims S."/>
            <person name="Skuce C.D."/>
            <person name="Smith M."/>
            <person name="Steward C."/>
            <person name="Subramanian S."/>
            <person name="Sycamore N."/>
            <person name="Tracey A."/>
            <person name="Tromans A."/>
            <person name="Van Helmond Z."/>
            <person name="Wall M."/>
            <person name="Wallis J.M."/>
            <person name="White S."/>
            <person name="Whitehead S.L."/>
            <person name="Wilkinson J.E."/>
            <person name="Willey D.L."/>
            <person name="Williams H."/>
            <person name="Wilming L."/>
            <person name="Wray P.W."/>
            <person name="Wu Z."/>
            <person name="Coulson A."/>
            <person name="Vaudin M."/>
            <person name="Sulston J.E."/>
            <person name="Durbin R.M."/>
            <person name="Hubbard T."/>
            <person name="Wooster R."/>
            <person name="Dunham I."/>
            <person name="Carter N.P."/>
            <person name="McVean G."/>
            <person name="Ross M.T."/>
            <person name="Harrow J."/>
            <person name="Olson M.V."/>
            <person name="Beck S."/>
            <person name="Rogers J."/>
            <person name="Bentley D.R."/>
        </authorList>
    </citation>
    <scope>NUCLEOTIDE SEQUENCE [LARGE SCALE GENOMIC DNA]</scope>
</reference>
<reference key="4">
    <citation type="journal article" date="2004" name="Genome Res.">
        <title>The status, quality, and expansion of the NIH full-length cDNA project: the Mammalian Gene Collection (MGC).</title>
        <authorList>
            <consortium name="The MGC Project Team"/>
        </authorList>
    </citation>
    <scope>NUCLEOTIDE SEQUENCE [LARGE SCALE MRNA]</scope>
    <source>
        <tissue>Lymph</tissue>
        <tissue>Pancreas</tissue>
    </source>
</reference>
<reference key="5">
    <citation type="journal article" date="2007" name="BMC Genomics">
        <title>The full-ORF clone resource of the German cDNA consortium.</title>
        <authorList>
            <person name="Bechtel S."/>
            <person name="Rosenfelder H."/>
            <person name="Duda A."/>
            <person name="Schmidt C.P."/>
            <person name="Ernst U."/>
            <person name="Wellenreuther R."/>
            <person name="Mehrle A."/>
            <person name="Schuster C."/>
            <person name="Bahr A."/>
            <person name="Bloecker H."/>
            <person name="Heubner D."/>
            <person name="Hoerlein A."/>
            <person name="Michel G."/>
            <person name="Wedler H."/>
            <person name="Koehrer K."/>
            <person name="Ottenwaelder B."/>
            <person name="Poustka A."/>
            <person name="Wiemann S."/>
            <person name="Schupp I."/>
        </authorList>
    </citation>
    <scope>NUCLEOTIDE SEQUENCE [LARGE SCALE MRNA] OF 1-162</scope>
    <source>
        <tissue>Bone marrow</tissue>
    </source>
</reference>
<reference key="6">
    <citation type="journal article" date="2000" name="J. Biol. Chem.">
        <title>Cloning, genomic organization, and characterization of a human cholinephosphotransferase.</title>
        <authorList>
            <person name="Henneberry A.L."/>
            <person name="Wistow G."/>
            <person name="McMaster C.R."/>
        </authorList>
    </citation>
    <scope>FUNCTION</scope>
    <scope>CATALYTIC ACTIVITY</scope>
</reference>
<reference key="7">
    <citation type="journal article" date="2002" name="Lipids">
        <title>PC and PE synthesis: mixed micellar analysis of the cholinephosphotransferase and ethanolaminephosphotransferase activities of human choline/ethanolamine phosphotransferase 1 (CEPT1).</title>
        <authorList>
            <person name="Wright M.M."/>
            <person name="McMaster C.R."/>
        </authorList>
    </citation>
    <scope>BIOPHYSICOCHEMICAL PROPERTIES</scope>
    <scope>FUNCTION</scope>
</reference>
<reference key="8">
    <citation type="journal article" date="2002" name="Mol. Biol. Cell">
        <title>The major sites of cellular phospholipid synthesis and molecular determinants of fatty acid and lipid head group specificity.</title>
        <authorList>
            <person name="Henneberry A.L."/>
            <person name="Wright M.M."/>
            <person name="McMaster C.R."/>
        </authorList>
    </citation>
    <scope>SUBCELLULAR LOCATION</scope>
    <scope>MUTAGENESIS OF ASN-144; SER-146; GLY-156; THR-214; GLU-215; VAL-216; ILE-221; LEU-226 AND VAL-228</scope>
</reference>
<reference key="9">
    <citation type="journal article" date="2008" name="Mol. Cell">
        <title>Kinase-selective enrichment enables quantitative phosphoproteomics of the kinome across the cell cycle.</title>
        <authorList>
            <person name="Daub H."/>
            <person name="Olsen J.V."/>
            <person name="Bairlein M."/>
            <person name="Gnad F."/>
            <person name="Oppermann F.S."/>
            <person name="Korner R."/>
            <person name="Greff Z."/>
            <person name="Keri G."/>
            <person name="Stemmann O."/>
            <person name="Mann M."/>
        </authorList>
    </citation>
    <scope>PHOSPHORYLATION [LARGE SCALE ANALYSIS] AT SER-18 AND THR-40</scope>
    <scope>IDENTIFICATION BY MASS SPECTROMETRY [LARGE SCALE ANALYSIS]</scope>
    <source>
        <tissue>Cervix carcinoma</tissue>
    </source>
</reference>
<reference key="10">
    <citation type="journal article" date="2010" name="Sci. Signal.">
        <title>Quantitative phosphoproteomics reveals widespread full phosphorylation site occupancy during mitosis.</title>
        <authorList>
            <person name="Olsen J.V."/>
            <person name="Vermeulen M."/>
            <person name="Santamaria A."/>
            <person name="Kumar C."/>
            <person name="Miller M.L."/>
            <person name="Jensen L.J."/>
            <person name="Gnad F."/>
            <person name="Cox J."/>
            <person name="Jensen T.S."/>
            <person name="Nigg E.A."/>
            <person name="Brunak S."/>
            <person name="Mann M."/>
        </authorList>
    </citation>
    <scope>PHOSPHORYLATION [LARGE SCALE ANALYSIS] AT SER-18</scope>
    <scope>IDENTIFICATION BY MASS SPECTROMETRY [LARGE SCALE ANALYSIS]</scope>
    <source>
        <tissue>Cervix carcinoma</tissue>
    </source>
</reference>
<reference key="11">
    <citation type="journal article" date="2013" name="J. Proteome Res.">
        <title>Toward a comprehensive characterization of a human cancer cell phosphoproteome.</title>
        <authorList>
            <person name="Zhou H."/>
            <person name="Di Palma S."/>
            <person name="Preisinger C."/>
            <person name="Peng M."/>
            <person name="Polat A.N."/>
            <person name="Heck A.J."/>
            <person name="Mohammed S."/>
        </authorList>
    </citation>
    <scope>PHOSPHORYLATION [LARGE SCALE ANALYSIS] AT THR-40</scope>
    <scope>IDENTIFICATION BY MASS SPECTROMETRY [LARGE SCALE ANALYSIS]</scope>
    <source>
        <tissue>Erythroleukemia</tissue>
    </source>
</reference>
<reference key="12">
    <citation type="journal article" date="2015" name="Proteomics">
        <title>N-terminome analysis of the human mitochondrial proteome.</title>
        <authorList>
            <person name="Vaca Jacome A.S."/>
            <person name="Rabilloud T."/>
            <person name="Schaeffer-Reiss C."/>
            <person name="Rompais M."/>
            <person name="Ayoub D."/>
            <person name="Lane L."/>
            <person name="Bairoch A."/>
            <person name="Van Dorsselaer A."/>
            <person name="Carapito C."/>
        </authorList>
    </citation>
    <scope>IDENTIFICATION BY MASS SPECTROMETRY [LARGE SCALE ANALYSIS]</scope>
</reference>
<reference evidence="15 16" key="13">
    <citation type="journal article" date="2023" name="Nat. Commun.">
        <title>Structural basis for catalysis of human choline/ethanolamine phosphotransferase 1.</title>
        <authorList>
            <person name="Wang Z."/>
            <person name="Yang M."/>
            <person name="Yang Y."/>
            <person name="He Y."/>
            <person name="Qian H."/>
        </authorList>
    </citation>
    <scope>STRUCTURE BY ELECTRON MICROSCOPY (3.70 ANGSTROMS) OF 28-407 IN COMPLEX WITH MAGNESIUM AND CDP-CHOLINE</scope>
    <scope>FUNCTION</scope>
    <scope>CATALYTIC ACTIVITY</scope>
    <scope>COFACTOR</scope>
    <scope>MUTAGENESIS OF ASN-86; ASP-136; GLU-151; ASP-154; ASP-158; THR-162; THR-169; ALA-196; ASP-212; VAL-216; GLN-217; SER-261 AND TYR-265</scope>
</reference>
<feature type="chain" id="PRO_0000289245" description="Choline/ethanolaminephosphotransferase 1">
    <location>
        <begin position="1"/>
        <end position="416"/>
    </location>
</feature>
<feature type="transmembrane region" description="Helical" evidence="8 15 16">
    <location>
        <begin position="89"/>
        <end position="108"/>
    </location>
</feature>
<feature type="transmembrane region" description="Helical" evidence="8 15 16">
    <location>
        <begin position="116"/>
        <end position="133"/>
    </location>
</feature>
<feature type="transmembrane region" description="Helical" evidence="8 15 16">
    <location>
        <begin position="156"/>
        <end position="176"/>
    </location>
</feature>
<feature type="transmembrane region" description="Helical" evidence="8 15 16">
    <location>
        <begin position="180"/>
        <end position="199"/>
    </location>
</feature>
<feature type="transmembrane region" description="Helical" evidence="8 15 16">
    <location>
        <begin position="210"/>
        <end position="230"/>
    </location>
</feature>
<feature type="transmembrane region" description="Helical" evidence="8 15 16">
    <location>
        <begin position="246"/>
        <end position="267"/>
    </location>
</feature>
<feature type="transmembrane region" description="Helical" evidence="8 15 16">
    <location>
        <begin position="286"/>
        <end position="306"/>
    </location>
</feature>
<feature type="transmembrane region" description="Helical" evidence="8 15 16">
    <location>
        <begin position="315"/>
        <end position="334"/>
    </location>
</feature>
<feature type="transmembrane region" description="Helical" evidence="8 15 16">
    <location>
        <begin position="349"/>
        <end position="363"/>
    </location>
</feature>
<feature type="transmembrane region" description="Helical" evidence="8 15 16">
    <location>
        <begin position="368"/>
        <end position="388"/>
    </location>
</feature>
<feature type="region of interest" description="Disordered" evidence="3">
    <location>
        <begin position="1"/>
        <end position="20"/>
    </location>
</feature>
<feature type="active site" description="Proton acceptor" evidence="13">
    <location>
        <position position="155"/>
    </location>
</feature>
<feature type="binding site" evidence="13">
    <location>
        <position position="86"/>
    </location>
    <ligand>
        <name>CDP-choline</name>
        <dbReference type="ChEBI" id="CHEBI:58779"/>
    </ligand>
</feature>
<feature type="binding site" evidence="8 15 16">
    <location>
        <position position="133"/>
    </location>
    <ligand>
        <name>Mg(2+)</name>
        <dbReference type="ChEBI" id="CHEBI:18420"/>
        <label>1</label>
    </ligand>
</feature>
<feature type="binding site" evidence="8 15 16">
    <location>
        <position position="133"/>
    </location>
    <ligand>
        <name>Mg(2+)</name>
        <dbReference type="ChEBI" id="CHEBI:18420"/>
        <label>2</label>
    </ligand>
</feature>
<feature type="binding site" evidence="13">
    <location>
        <position position="151"/>
    </location>
    <ligand>
        <name>CDP-choline</name>
        <dbReference type="ChEBI" id="CHEBI:58779"/>
    </ligand>
</feature>
<feature type="binding site" evidence="8 15 16">
    <location>
        <position position="154"/>
    </location>
    <ligand>
        <name>Mg(2+)</name>
        <dbReference type="ChEBI" id="CHEBI:18420"/>
        <label>1</label>
    </ligand>
</feature>
<feature type="binding site" evidence="8 15 16">
    <location>
        <position position="154"/>
    </location>
    <ligand>
        <name>Mg(2+)</name>
        <dbReference type="ChEBI" id="CHEBI:18420"/>
        <label>2</label>
    </ligand>
</feature>
<feature type="binding site" evidence="8 15 16">
    <location>
        <position position="158"/>
    </location>
    <ligand>
        <name>Mg(2+)</name>
        <dbReference type="ChEBI" id="CHEBI:18420"/>
        <label>2</label>
    </ligand>
</feature>
<feature type="site" description="Increases basicity of active site His" evidence="1">
    <location>
        <position position="151"/>
    </location>
</feature>
<feature type="modified residue" description="Phosphoserine" evidence="17 18">
    <location>
        <position position="18"/>
    </location>
</feature>
<feature type="modified residue" description="Phosphothreonine" evidence="17 19">
    <location>
        <position position="40"/>
    </location>
</feature>
<feature type="glycosylation site" description="N-linked (GlcNAc...) asparagine" evidence="2">
    <location>
        <position position="144"/>
    </location>
</feature>
<feature type="mutagenesis site" description="Strongly decreased cholinephosphotransferase activity." evidence="8">
    <original>N</original>
    <variation>A</variation>
    <location>
        <position position="86"/>
    </location>
</feature>
<feature type="mutagenesis site" description="Decreased cholinephosphotransferase activity." evidence="8">
    <original>D</original>
    <variation>A</variation>
    <location>
        <position position="136"/>
    </location>
</feature>
<feature type="mutagenesis site" description="Induces a reduction in both cholinephosphotransferase and ethanolaminephosphotransferase activities.">
    <original>K</original>
    <variation>M</variation>
    <location>
        <position position="138"/>
    </location>
</feature>
<feature type="mutagenesis site" description="No effect." evidence="7">
    <original>N</original>
    <variation>G</variation>
    <location>
        <position position="144"/>
    </location>
</feature>
<feature type="mutagenesis site" description="No effect." evidence="7">
    <original>S</original>
    <variation>Q</variation>
    <variation>C</variation>
    <location>
        <position position="146"/>
    </location>
</feature>
<feature type="mutagenesis site" description="Strongly decreased cholinephosphotransferase activity." evidence="8">
    <original>E</original>
    <variation>A</variation>
    <location>
        <position position="151"/>
    </location>
</feature>
<feature type="mutagenesis site" description="Abolished cholinephosphotransferase activity." evidence="8">
    <original>D</original>
    <variation>A</variation>
    <location>
        <position position="154"/>
    </location>
</feature>
<feature type="mutagenesis site" description="Induces a reduction in cholinephosphotransferase activity and abolishes ethanolaminephosphotransferase activity." evidence="7">
    <original>G</original>
    <variation>C</variation>
    <variation>S</variation>
    <variation>A</variation>
    <location>
        <position position="156"/>
    </location>
</feature>
<feature type="mutagenesis site" description="Decreased cholinephosphotransferase activity." evidence="8">
    <original>D</original>
    <variation>A</variation>
    <location>
        <position position="158"/>
    </location>
</feature>
<feature type="mutagenesis site" description="Decreased cholinephosphotransferase activity." evidence="8">
    <original>T</original>
    <variation>F</variation>
    <location>
        <position position="162"/>
    </location>
</feature>
<feature type="mutagenesis site" description="Decreased cholinephosphotransferase activity." evidence="8">
    <original>T</original>
    <variation>N</variation>
    <location>
        <position position="169"/>
    </location>
</feature>
<feature type="mutagenesis site" description="Decreased cholinephosphotransferase activity." evidence="8">
    <original>A</original>
    <variation>L</variation>
    <location>
        <position position="196"/>
    </location>
</feature>
<feature type="mutagenesis site" description="Decreased cholinephosphotransferase activity." evidence="8">
    <original>D</original>
    <variation>A</variation>
    <location>
        <position position="212"/>
    </location>
</feature>
<feature type="mutagenesis site" description="Alters the profile of diacylglycerol utilization and results in modest reduction in enzyme activity." evidence="7">
    <original>T</original>
    <variation>A</variation>
    <location>
        <position position="214"/>
    </location>
</feature>
<feature type="mutagenesis site" description="Induces a strong reduction in enzyme activity without altering diacylglycerol specificity." evidence="7">
    <original>E</original>
    <variation>A</variation>
    <variation>D</variation>
    <location>
        <position position="215"/>
    </location>
</feature>
<feature type="mutagenesis site" description="Induces a strong reduction in enzyme activity and alters diacylglycerol specificity." evidence="7">
    <original>E</original>
    <variation>Q</variation>
    <location>
        <position position="215"/>
    </location>
</feature>
<feature type="mutagenesis site" description="Alters the profile of diacylglycerol utilization and results in modest reduction in enzyme activity." evidence="7 8">
    <original>V</original>
    <variation>A</variation>
    <location>
        <position position="216"/>
    </location>
</feature>
<feature type="mutagenesis site" description="Decreased cholinephosphotransferase activity." evidence="8">
    <original>Q</original>
    <variation>L</variation>
    <location>
        <position position="217"/>
    </location>
</feature>
<feature type="mutagenesis site" description="Alters the profile of diacylglycerol utilization and results in modest reduction in enzyme activity." evidence="7">
    <original>I</original>
    <variation>A</variation>
    <location>
        <position position="221"/>
    </location>
</feature>
<feature type="mutagenesis site" description="Does not affect either the enzyme activity or the diacylglycerol specificity." evidence="7">
    <original>L</original>
    <variation>A</variation>
    <location>
        <position position="226"/>
    </location>
</feature>
<feature type="mutagenesis site" description="Does not affect either the enzyme activity or the diacylglycerol specificity." evidence="7">
    <original>V</original>
    <variation>A</variation>
    <location>
        <position position="228"/>
    </location>
</feature>
<feature type="mutagenesis site" description="Decreased cholinephosphotransferase activity." evidence="8">
    <original>S</original>
    <variation>A</variation>
    <location>
        <position position="261"/>
    </location>
</feature>
<feature type="mutagenesis site" description="Decreased cholinephosphotransferase activity." evidence="8">
    <original>Y</original>
    <variation>A</variation>
    <location>
        <position position="265"/>
    </location>
</feature>
<proteinExistence type="evidence at protein level"/>
<dbReference type="EC" id="2.7.8.1" evidence="4"/>
<dbReference type="EC" id="2.7.8.2" evidence="4 5 8"/>
<dbReference type="EC" id="2.7.8.22" evidence="5"/>
<dbReference type="EMBL" id="AF068302">
    <property type="protein sequence ID" value="AAD25170.1"/>
    <property type="molecule type" value="mRNA"/>
</dbReference>
<dbReference type="EMBL" id="AF138862">
    <property type="protein sequence ID" value="AAF61194.1"/>
    <property type="status" value="ALT_FRAME"/>
    <property type="molecule type" value="mRNA"/>
</dbReference>
<dbReference type="EMBL" id="AL355816">
    <property type="status" value="NOT_ANNOTATED_CDS"/>
    <property type="molecule type" value="Genomic_DNA"/>
</dbReference>
<dbReference type="EMBL" id="BC032610">
    <property type="protein sequence ID" value="AAH32610.1"/>
    <property type="molecule type" value="mRNA"/>
</dbReference>
<dbReference type="EMBL" id="BC049196">
    <property type="protein sequence ID" value="AAH49196.1"/>
    <property type="molecule type" value="mRNA"/>
</dbReference>
<dbReference type="EMBL" id="AL833102">
    <property type="protein sequence ID" value="CAH10403.1"/>
    <property type="molecule type" value="mRNA"/>
</dbReference>
<dbReference type="CCDS" id="CCDS830.1"/>
<dbReference type="RefSeq" id="NP_001007795.1">
    <property type="nucleotide sequence ID" value="NM_001007794.3"/>
</dbReference>
<dbReference type="RefSeq" id="NP_001317672.1">
    <property type="nucleotide sequence ID" value="NM_001330743.2"/>
</dbReference>
<dbReference type="RefSeq" id="NP_006081.1">
    <property type="nucleotide sequence ID" value="NM_006090.5"/>
</dbReference>
<dbReference type="PDB" id="8GYW">
    <property type="method" value="EM"/>
    <property type="resolution" value="3.90 A"/>
    <property type="chains" value="A/B=28-407"/>
</dbReference>
<dbReference type="PDB" id="8GYX">
    <property type="method" value="EM"/>
    <property type="resolution" value="3.70 A"/>
    <property type="chains" value="A/B=28-407"/>
</dbReference>
<dbReference type="PDBsum" id="8GYW"/>
<dbReference type="PDBsum" id="8GYX"/>
<dbReference type="EMDB" id="EMD-34378"/>
<dbReference type="EMDB" id="EMD-34379"/>
<dbReference type="SMR" id="Q9Y6K0"/>
<dbReference type="BioGRID" id="115662">
    <property type="interactions" value="85"/>
</dbReference>
<dbReference type="FunCoup" id="Q9Y6K0">
    <property type="interactions" value="2848"/>
</dbReference>
<dbReference type="IntAct" id="Q9Y6K0">
    <property type="interactions" value="62"/>
</dbReference>
<dbReference type="MINT" id="Q9Y6K0"/>
<dbReference type="STRING" id="9606.ENSP00000441980"/>
<dbReference type="BindingDB" id="Q9Y6K0"/>
<dbReference type="ChEMBL" id="CHEMBL4105740"/>
<dbReference type="DrugBank" id="DB00122">
    <property type="generic name" value="Choline"/>
</dbReference>
<dbReference type="DrugBank" id="DB14006">
    <property type="generic name" value="Choline salicylate"/>
</dbReference>
<dbReference type="SwissLipids" id="SLP:000000137"/>
<dbReference type="TCDB" id="4.F.1.1.1">
    <property type="family name" value="the choline/ethanolaminephosphotransferase 1 (cept1) family"/>
</dbReference>
<dbReference type="GlyCosmos" id="Q9Y6K0">
    <property type="glycosylation" value="1 site, No reported glycans"/>
</dbReference>
<dbReference type="GlyGen" id="Q9Y6K0">
    <property type="glycosylation" value="2 sites, 1 O-linked glycan (1 site)"/>
</dbReference>
<dbReference type="iPTMnet" id="Q9Y6K0"/>
<dbReference type="PhosphoSitePlus" id="Q9Y6K0"/>
<dbReference type="SwissPalm" id="Q9Y6K0"/>
<dbReference type="BioMuta" id="CEPT1"/>
<dbReference type="DMDM" id="74753524"/>
<dbReference type="jPOST" id="Q9Y6K0"/>
<dbReference type="MassIVE" id="Q9Y6K0"/>
<dbReference type="PaxDb" id="9606-ENSP00000441980"/>
<dbReference type="PeptideAtlas" id="Q9Y6K0"/>
<dbReference type="ProteomicsDB" id="86708"/>
<dbReference type="Pumba" id="Q9Y6K0"/>
<dbReference type="Antibodypedia" id="46938">
    <property type="antibodies" value="104 antibodies from 18 providers"/>
</dbReference>
<dbReference type="DNASU" id="10390"/>
<dbReference type="Ensembl" id="ENST00000357172.9">
    <property type="protein sequence ID" value="ENSP00000349696.4"/>
    <property type="gene ID" value="ENSG00000134255.16"/>
</dbReference>
<dbReference type="Ensembl" id="ENST00000545121.5">
    <property type="protein sequence ID" value="ENSP00000441980.1"/>
    <property type="gene ID" value="ENSG00000134255.16"/>
</dbReference>
<dbReference type="GeneID" id="10390"/>
<dbReference type="KEGG" id="hsa:10390"/>
<dbReference type="MANE-Select" id="ENST00000357172.9">
    <property type="protein sequence ID" value="ENSP00000349696.4"/>
    <property type="RefSeq nucleotide sequence ID" value="NM_006090.5"/>
    <property type="RefSeq protein sequence ID" value="NP_006081.1"/>
</dbReference>
<dbReference type="UCSC" id="uc001eah.1">
    <property type="organism name" value="human"/>
</dbReference>
<dbReference type="AGR" id="HGNC:24289"/>
<dbReference type="CTD" id="10390"/>
<dbReference type="DisGeNET" id="10390"/>
<dbReference type="GeneCards" id="CEPT1"/>
<dbReference type="HGNC" id="HGNC:24289">
    <property type="gene designation" value="CEPT1"/>
</dbReference>
<dbReference type="HPA" id="ENSG00000134255">
    <property type="expression patterns" value="Low tissue specificity"/>
</dbReference>
<dbReference type="MIM" id="616751">
    <property type="type" value="gene"/>
</dbReference>
<dbReference type="neXtProt" id="NX_Q9Y6K0"/>
<dbReference type="OpenTargets" id="ENSG00000134255"/>
<dbReference type="PharmGKB" id="PA134892657"/>
<dbReference type="VEuPathDB" id="HostDB:ENSG00000134255"/>
<dbReference type="eggNOG" id="KOG2877">
    <property type="taxonomic scope" value="Eukaryota"/>
</dbReference>
<dbReference type="GeneTree" id="ENSGT00950000183117"/>
<dbReference type="HOGENOM" id="CLU_035066_1_0_1"/>
<dbReference type="InParanoid" id="Q9Y6K0"/>
<dbReference type="OMA" id="RICQEDF"/>
<dbReference type="OrthoDB" id="196717at2759"/>
<dbReference type="PAN-GO" id="Q9Y6K0">
    <property type="GO annotations" value="5 GO annotations based on evolutionary models"/>
</dbReference>
<dbReference type="PhylomeDB" id="Q9Y6K0"/>
<dbReference type="TreeFam" id="TF313270"/>
<dbReference type="BioCyc" id="MetaCyc:HS05844-MONOMER"/>
<dbReference type="BRENDA" id="2.7.8.1">
    <property type="organism ID" value="2681"/>
</dbReference>
<dbReference type="BRENDA" id="2.7.8.2">
    <property type="organism ID" value="2681"/>
</dbReference>
<dbReference type="PathwayCommons" id="Q9Y6K0"/>
<dbReference type="Reactome" id="R-HSA-1483191">
    <property type="pathway name" value="Synthesis of PC"/>
</dbReference>
<dbReference type="Reactome" id="R-HSA-1483213">
    <property type="pathway name" value="Synthesis of PE"/>
</dbReference>
<dbReference type="SABIO-RK" id="Q9Y6K0"/>
<dbReference type="SignaLink" id="Q9Y6K0"/>
<dbReference type="UniPathway" id="UPA00558">
    <property type="reaction ID" value="UER00743"/>
</dbReference>
<dbReference type="UniPathway" id="UPA00753">
    <property type="reaction ID" value="UER00740"/>
</dbReference>
<dbReference type="BioGRID-ORCS" id="10390">
    <property type="hits" value="109 hits in 1158 CRISPR screens"/>
</dbReference>
<dbReference type="ChiTaRS" id="CEPT1">
    <property type="organism name" value="human"/>
</dbReference>
<dbReference type="GenomeRNAi" id="10390"/>
<dbReference type="Pharos" id="Q9Y6K0">
    <property type="development level" value="Tchem"/>
</dbReference>
<dbReference type="PRO" id="PR:Q9Y6K0"/>
<dbReference type="Proteomes" id="UP000005640">
    <property type="component" value="Chromosome 1"/>
</dbReference>
<dbReference type="RNAct" id="Q9Y6K0">
    <property type="molecule type" value="protein"/>
</dbReference>
<dbReference type="Bgee" id="ENSG00000134255">
    <property type="expression patterns" value="Expressed in buccal mucosa cell and 200 other cell types or tissues"/>
</dbReference>
<dbReference type="ExpressionAtlas" id="Q9Y6K0">
    <property type="expression patterns" value="baseline and differential"/>
</dbReference>
<dbReference type="GO" id="GO:0005789">
    <property type="term" value="C:endoplasmic reticulum membrane"/>
    <property type="evidence" value="ECO:0000314"/>
    <property type="project" value="UniProtKB"/>
</dbReference>
<dbReference type="GO" id="GO:0005794">
    <property type="term" value="C:Golgi apparatus"/>
    <property type="evidence" value="ECO:0000318"/>
    <property type="project" value="GO_Central"/>
</dbReference>
<dbReference type="GO" id="GO:0016020">
    <property type="term" value="C:membrane"/>
    <property type="evidence" value="ECO:0000304"/>
    <property type="project" value="ProtInc"/>
</dbReference>
<dbReference type="GO" id="GO:0031965">
    <property type="term" value="C:nuclear membrane"/>
    <property type="evidence" value="ECO:0007669"/>
    <property type="project" value="UniProtKB-SubCell"/>
</dbReference>
<dbReference type="GO" id="GO:0047359">
    <property type="term" value="F:1-alkenyl-2-acylglycerol choline phosphotransferase activity"/>
    <property type="evidence" value="ECO:0007669"/>
    <property type="project" value="UniProtKB-EC"/>
</dbReference>
<dbReference type="GO" id="GO:0004142">
    <property type="term" value="F:diacylglycerol cholinephosphotransferase activity"/>
    <property type="evidence" value="ECO:0000314"/>
    <property type="project" value="UniProtKB"/>
</dbReference>
<dbReference type="GO" id="GO:0004307">
    <property type="term" value="F:ethanolaminephosphotransferase activity"/>
    <property type="evidence" value="ECO:0000314"/>
    <property type="project" value="UniProtKB"/>
</dbReference>
<dbReference type="GO" id="GO:0046872">
    <property type="term" value="F:metal ion binding"/>
    <property type="evidence" value="ECO:0007669"/>
    <property type="project" value="UniProtKB-KW"/>
</dbReference>
<dbReference type="GO" id="GO:0006629">
    <property type="term" value="P:lipid metabolic process"/>
    <property type="evidence" value="ECO:0000304"/>
    <property type="project" value="ProtInc"/>
</dbReference>
<dbReference type="GO" id="GO:0006656">
    <property type="term" value="P:phosphatidylcholine biosynthetic process"/>
    <property type="evidence" value="ECO:0000314"/>
    <property type="project" value="UniProtKB"/>
</dbReference>
<dbReference type="GO" id="GO:0006646">
    <property type="term" value="P:phosphatidylethanolamine biosynthetic process"/>
    <property type="evidence" value="ECO:0000314"/>
    <property type="project" value="UniProtKB"/>
</dbReference>
<dbReference type="FunFam" id="1.20.120.1760:FF:000002">
    <property type="entry name" value="Choline/ethanolamine phosphotransferase 1"/>
    <property type="match status" value="1"/>
</dbReference>
<dbReference type="Gene3D" id="1.20.120.1760">
    <property type="match status" value="1"/>
</dbReference>
<dbReference type="InterPro" id="IPR000462">
    <property type="entry name" value="CDP-OH_P_trans"/>
</dbReference>
<dbReference type="InterPro" id="IPR043130">
    <property type="entry name" value="CDP-OH_PTrfase_TM_dom"/>
</dbReference>
<dbReference type="InterPro" id="IPR048254">
    <property type="entry name" value="CDP_ALCOHOL_P_TRANSF_CS"/>
</dbReference>
<dbReference type="InterPro" id="IPR014472">
    <property type="entry name" value="CHOPT"/>
</dbReference>
<dbReference type="PANTHER" id="PTHR10414:SF27">
    <property type="entry name" value="CHOLINE_ETHANOLAMINEPHOSPHOTRANSFERASE 1"/>
    <property type="match status" value="1"/>
</dbReference>
<dbReference type="PANTHER" id="PTHR10414">
    <property type="entry name" value="ETHANOLAMINEPHOSPHOTRANSFERASE"/>
    <property type="match status" value="1"/>
</dbReference>
<dbReference type="Pfam" id="PF01066">
    <property type="entry name" value="CDP-OH_P_transf"/>
    <property type="match status" value="1"/>
</dbReference>
<dbReference type="PIRSF" id="PIRSF015665">
    <property type="entry name" value="CHOPT"/>
    <property type="match status" value="1"/>
</dbReference>
<dbReference type="PROSITE" id="PS00379">
    <property type="entry name" value="CDP_ALCOHOL_P_TRANSF"/>
    <property type="match status" value="1"/>
</dbReference>
<name>CEPT1_HUMAN</name>